<name>METK_METHJ</name>
<comment type="function">
    <text evidence="1">Catalyzes the formation of S-adenosylmethionine from methionine and ATP.</text>
</comment>
<comment type="catalytic activity">
    <reaction evidence="1">
        <text>L-methionine + ATP + H2O = S-adenosyl-L-methionine + phosphate + diphosphate</text>
        <dbReference type="Rhea" id="RHEA:21080"/>
        <dbReference type="ChEBI" id="CHEBI:15377"/>
        <dbReference type="ChEBI" id="CHEBI:30616"/>
        <dbReference type="ChEBI" id="CHEBI:33019"/>
        <dbReference type="ChEBI" id="CHEBI:43474"/>
        <dbReference type="ChEBI" id="CHEBI:57844"/>
        <dbReference type="ChEBI" id="CHEBI:59789"/>
        <dbReference type="EC" id="2.5.1.6"/>
    </reaction>
</comment>
<comment type="cofactor">
    <cofactor evidence="1">
        <name>Mg(2+)</name>
        <dbReference type="ChEBI" id="CHEBI:18420"/>
    </cofactor>
</comment>
<comment type="pathway">
    <text evidence="1">Amino-acid biosynthesis; S-adenosyl-L-methionine biosynthesis; S-adenosyl-L-methionine from L-methionine: step 1/1.</text>
</comment>
<comment type="similarity">
    <text evidence="1">Belongs to the AdoMet synthase 2 family.</text>
</comment>
<reference key="1">
    <citation type="journal article" date="2016" name="Stand. Genomic Sci.">
        <title>Complete genome sequence of Methanospirillum hungatei type strain JF1.</title>
        <authorList>
            <person name="Gunsalus R.P."/>
            <person name="Cook L.E."/>
            <person name="Crable B."/>
            <person name="Rohlin L."/>
            <person name="McDonald E."/>
            <person name="Mouttaki H."/>
            <person name="Sieber J.R."/>
            <person name="Poweleit N."/>
            <person name="Zhou H."/>
            <person name="Lapidus A.L."/>
            <person name="Daligault H.E."/>
            <person name="Land M."/>
            <person name="Gilna P."/>
            <person name="Ivanova N."/>
            <person name="Kyrpides N."/>
            <person name="Culley D.E."/>
            <person name="McInerney M.J."/>
        </authorList>
    </citation>
    <scope>NUCLEOTIDE SEQUENCE [LARGE SCALE GENOMIC DNA]</scope>
    <source>
        <strain>ATCC 27890 / DSM 864 / NBRC 100397 / JF-1</strain>
    </source>
</reference>
<sequence length="400" mass="43886">MSRNITIEMLNQIPVQDQQIELVERKCLGHPDSIADGIAEAVSRALCNTYIDQFGGVLHHNTDQGEIVAGESMPKFGGGKIIKPIFVLLDGRATKEFNGEKIAADTVALKAAKDYLRTILPELNLDQHLIMDCRLGTGSTDLRDVFKPEAGQIPRANDTSFGVSYAPFSDIEKCIREISSYIDTTLRPKYPVYGTDIKIMGLRQGNTIKLTICCAMVDRYVSSLSDYVNYREKLAEEALKVAKTCTDKKVEVSVNTADCDIECSLFLTVTGTSAEMGDDGSVGRGNRANGLITPHRPMSMEATSGKNPINHIGKIYNLLSNELAHTCVEKVDGIAEIQVRLLSQIGSPIDQPLVASAQIIPKPSFTVKDIERDVYEIIDSGLENITSVTERVIRGELKTF</sequence>
<keyword id="KW-0067">ATP-binding</keyword>
<keyword id="KW-0460">Magnesium</keyword>
<keyword id="KW-0547">Nucleotide-binding</keyword>
<keyword id="KW-0554">One-carbon metabolism</keyword>
<keyword id="KW-1185">Reference proteome</keyword>
<keyword id="KW-0808">Transferase</keyword>
<accession>Q2FN14</accession>
<dbReference type="EC" id="2.5.1.6" evidence="1"/>
<dbReference type="EMBL" id="CP000254">
    <property type="protein sequence ID" value="ABD40673.1"/>
    <property type="molecule type" value="Genomic_DNA"/>
</dbReference>
<dbReference type="RefSeq" id="WP_011447952.1">
    <property type="nucleotide sequence ID" value="NC_007796.1"/>
</dbReference>
<dbReference type="SMR" id="Q2FN14"/>
<dbReference type="FunCoup" id="Q2FN14">
    <property type="interactions" value="165"/>
</dbReference>
<dbReference type="STRING" id="323259.Mhun_0923"/>
<dbReference type="EnsemblBacteria" id="ABD40673">
    <property type="protein sequence ID" value="ABD40673"/>
    <property type="gene ID" value="Mhun_0923"/>
</dbReference>
<dbReference type="GeneID" id="3924610"/>
<dbReference type="KEGG" id="mhu:Mhun_0923"/>
<dbReference type="eggNOG" id="arCOG01678">
    <property type="taxonomic scope" value="Archaea"/>
</dbReference>
<dbReference type="HOGENOM" id="CLU_057642_0_0_2"/>
<dbReference type="InParanoid" id="Q2FN14"/>
<dbReference type="OrthoDB" id="204488at2157"/>
<dbReference type="UniPathway" id="UPA00315">
    <property type="reaction ID" value="UER00080"/>
</dbReference>
<dbReference type="Proteomes" id="UP000001941">
    <property type="component" value="Chromosome"/>
</dbReference>
<dbReference type="GO" id="GO:0005524">
    <property type="term" value="F:ATP binding"/>
    <property type="evidence" value="ECO:0007669"/>
    <property type="project" value="UniProtKB-UniRule"/>
</dbReference>
<dbReference type="GO" id="GO:0000287">
    <property type="term" value="F:magnesium ion binding"/>
    <property type="evidence" value="ECO:0007669"/>
    <property type="project" value="UniProtKB-UniRule"/>
</dbReference>
<dbReference type="GO" id="GO:0004478">
    <property type="term" value="F:methionine adenosyltransferase activity"/>
    <property type="evidence" value="ECO:0007669"/>
    <property type="project" value="UniProtKB-UniRule"/>
</dbReference>
<dbReference type="GO" id="GO:0006730">
    <property type="term" value="P:one-carbon metabolic process"/>
    <property type="evidence" value="ECO:0007669"/>
    <property type="project" value="UniProtKB-KW"/>
</dbReference>
<dbReference type="GO" id="GO:0006556">
    <property type="term" value="P:S-adenosylmethionine biosynthetic process"/>
    <property type="evidence" value="ECO:0007669"/>
    <property type="project" value="UniProtKB-UniRule"/>
</dbReference>
<dbReference type="Gene3D" id="3.30.300.10">
    <property type="match status" value="1"/>
</dbReference>
<dbReference type="Gene3D" id="3.30.300.280">
    <property type="entry name" value="S-adenosylmethionine synthetase, C-terminal domain"/>
    <property type="match status" value="1"/>
</dbReference>
<dbReference type="HAMAP" id="MF_00136">
    <property type="entry name" value="S_AdoMet_synth2"/>
    <property type="match status" value="1"/>
</dbReference>
<dbReference type="InterPro" id="IPR027790">
    <property type="entry name" value="AdoMet_synthase_2_family"/>
</dbReference>
<dbReference type="InterPro" id="IPR042544">
    <property type="entry name" value="AdoMet_synthase_3"/>
</dbReference>
<dbReference type="InterPro" id="IPR002795">
    <property type="entry name" value="S-AdoMet_synthetase_arc"/>
</dbReference>
<dbReference type="NCBIfam" id="NF003364">
    <property type="entry name" value="PRK04439.1-3"/>
    <property type="match status" value="1"/>
</dbReference>
<dbReference type="NCBIfam" id="NF003366">
    <property type="entry name" value="PRK04439.1-5"/>
    <property type="match status" value="1"/>
</dbReference>
<dbReference type="PANTHER" id="PTHR36697">
    <property type="entry name" value="S-ADENOSYLMETHIONINE SYNTHASE"/>
    <property type="match status" value="1"/>
</dbReference>
<dbReference type="PANTHER" id="PTHR36697:SF1">
    <property type="entry name" value="S-ADENOSYLMETHIONINE SYNTHASE"/>
    <property type="match status" value="1"/>
</dbReference>
<dbReference type="Pfam" id="PF01941">
    <property type="entry name" value="AdoMet_Synthase"/>
    <property type="match status" value="1"/>
</dbReference>
<feature type="chain" id="PRO_0000259467" description="S-adenosylmethionine synthase">
    <location>
        <begin position="1"/>
        <end position="400"/>
    </location>
</feature>
<feature type="binding site" evidence="1">
    <location>
        <begin position="136"/>
        <end position="141"/>
    </location>
    <ligand>
        <name>ATP</name>
        <dbReference type="ChEBI" id="CHEBI:30616"/>
    </ligand>
</feature>
<proteinExistence type="inferred from homology"/>
<evidence type="ECO:0000255" key="1">
    <source>
        <dbReference type="HAMAP-Rule" id="MF_00136"/>
    </source>
</evidence>
<gene>
    <name evidence="1" type="primary">mat</name>
    <name type="ordered locus">Mhun_0923</name>
</gene>
<organism>
    <name type="scientific">Methanospirillum hungatei JF-1 (strain ATCC 27890 / DSM 864 / NBRC 100397 / JF-1)</name>
    <dbReference type="NCBI Taxonomy" id="323259"/>
    <lineage>
        <taxon>Archaea</taxon>
        <taxon>Methanobacteriati</taxon>
        <taxon>Methanobacteriota</taxon>
        <taxon>Stenosarchaea group</taxon>
        <taxon>Methanomicrobia</taxon>
        <taxon>Methanomicrobiales</taxon>
        <taxon>Methanospirillaceae</taxon>
        <taxon>Methanospirillum</taxon>
    </lineage>
</organism>
<protein>
    <recommendedName>
        <fullName evidence="1">S-adenosylmethionine synthase</fullName>
        <shortName evidence="1">AdoMet synthase</shortName>
        <ecNumber evidence="1">2.5.1.6</ecNumber>
    </recommendedName>
    <alternativeName>
        <fullName evidence="1">Methionine adenosyltransferase</fullName>
    </alternativeName>
</protein>